<sequence>MYNSQQQNIIKINKQDTDGRLQLFIVDAKRTLRNSSIELESSQIYIDVTKRLIDIASLFCKQEEIQYESFAEELLSILNSTQFKILGKCRELVIKLLTIIAKYARVNQLLGIESKDRSPSSSINKNNGFDQLYDFELNRIDENNNNNNNNNNNNNNNNNKNKTISPTHQTIQATIPSPKLQPFLDHDDKDDKEIIDIVSNKDKDQLNGVDDVDLSNTSGISCKEIFEKNPINFQKSHYRCLSYSPKLLEQQLQQKLVNQQIKLKNGKPSPIKRPSPPLPPPQQQQKEQQKEQKEQQKEQQKEQQKEQQKEQEQKQQEPQKYVKFEIQKSPPSNLLPPLPISSSNISNEISKQQQQQQQQQQQQQQQQQQQQQQQQQQQQQQIAQPPPPQSITSPQTISANNNILTTPLSSQPTQSLETPSTIKPPLLSRRVSDIIYSKNETNLNIKEPIHSKDIIPTPLETNVGGGGGEITKKVVGSEENLLSSSSEEETLSTSEEHDEYTTSTSGEDEEEDEDDDNIYNTNHYEISERKLKNKRPFKKTHVHHSLSANSPLSRKPYESPVFLLDPRLNDLKTSSDEYILKRPLVRSKSFSPNKEEEQIKKEPYRKLARSFSEIPSVKLIEDHNDDSQMAMCRICEEPIHSSLLEDHSKICAMANEEDMKAMNVDDHLRAVAKILLTRSNDIPHEKRKMIIELREIALFAVENGIKENLKMIHIMNDIIKNFDPKDDNRELAIKIQSLISDKVNALKRADDVINSSPRIFRTNSPRILKSPREEELSQTPLGGRLRSDSDPVHQTQIEYKPKGVPTISDFEFIKPITKGGYGKVFLAKKIRTGDIYAIKRLKKSDMIKKNQLDHVKVERNILAYTSNPFVVKMYYSFQTKEYYYLVMEYLQGGDCFSLLQMLGSMDENMAKMIIAETVLALEYLHSHGIVHRDVKPDNLLIDKKGHIKLTDFGLSKVGLLDRQTVVPPSYFSPTLSGKNNQSSSSSSVSNIGGSNTIGSNISSTNNNNNNNNTTGATMVGGHVINTETPIPSNTAIPAKKEKKLLSLAQSKSLFSASSSPSIPSLNLLNSDKPISPMMMGVKGFIPPPPINQQPISNIPTTTTTTTTTTTGQQSQQQSQQQQQTTPPLPPHNIHRKLSCVGTPDYLAPEILLGIGHGASADWFSLGVILYEFLCGVSPFNGSSVQETFQNILQRNISWPEDMSPEARDLIDKLLALDPRQRLGFNGAEEIKSHPFFKSINWKTILTQEPYFKPKIENLQDTSYFDPRKEIYKVSDDFAESCKPFVQNQNQNKESSTILTTSPPSTSSTTATATATTSNLDSITINQNTNANFDDFLYVNFQSLLELNKNYLAEAKPFNSNHRRRNST</sequence>
<keyword id="KW-0067">ATP-binding</keyword>
<keyword id="KW-0418">Kinase</keyword>
<keyword id="KW-0547">Nucleotide-binding</keyword>
<keyword id="KW-0597">Phosphoprotein</keyword>
<keyword id="KW-1185">Reference proteome</keyword>
<keyword id="KW-0723">Serine/threonine-protein kinase</keyword>
<keyword id="KW-0808">Transferase</keyword>
<dbReference type="EC" id="2.7.11.1"/>
<dbReference type="EMBL" id="AAFI02000014">
    <property type="protein sequence ID" value="EAL69378.1"/>
    <property type="molecule type" value="Genomic_DNA"/>
</dbReference>
<dbReference type="EMBL" id="AF020280">
    <property type="protein sequence ID" value="AAB70848.1"/>
    <property type="molecule type" value="Genomic_DNA"/>
</dbReference>
<dbReference type="RefSeq" id="XP_643264.1">
    <property type="nucleotide sequence ID" value="XM_638172.1"/>
</dbReference>
<dbReference type="SMR" id="Q552E9"/>
<dbReference type="STRING" id="44689.Q552E9"/>
<dbReference type="PaxDb" id="44689-DDB0185113"/>
<dbReference type="EnsemblProtists" id="EAL69378">
    <property type="protein sequence ID" value="EAL69378"/>
    <property type="gene ID" value="DDB_G0276157"/>
</dbReference>
<dbReference type="GeneID" id="8620307"/>
<dbReference type="KEGG" id="ddi:DDB_G0276157"/>
<dbReference type="dictyBase" id="DDB_G0276157">
    <property type="gene designation" value="pkgA"/>
</dbReference>
<dbReference type="VEuPathDB" id="AmoebaDB:DDB_G0276157"/>
<dbReference type="eggNOG" id="KOG0606">
    <property type="taxonomic scope" value="Eukaryota"/>
</dbReference>
<dbReference type="HOGENOM" id="CLU_256614_0_0_1"/>
<dbReference type="InParanoid" id="Q552E9"/>
<dbReference type="OMA" id="CAMANEE"/>
<dbReference type="PhylomeDB" id="Q552E9"/>
<dbReference type="PRO" id="PR:Q552E9"/>
<dbReference type="Proteomes" id="UP000002195">
    <property type="component" value="Chromosome 2"/>
</dbReference>
<dbReference type="GO" id="GO:0005524">
    <property type="term" value="F:ATP binding"/>
    <property type="evidence" value="ECO:0007669"/>
    <property type="project" value="UniProtKB-KW"/>
</dbReference>
<dbReference type="GO" id="GO:0106310">
    <property type="term" value="F:protein serine kinase activity"/>
    <property type="evidence" value="ECO:0007669"/>
    <property type="project" value="RHEA"/>
</dbReference>
<dbReference type="GO" id="GO:0004674">
    <property type="term" value="F:protein serine/threonine kinase activity"/>
    <property type="evidence" value="ECO:0000318"/>
    <property type="project" value="GO_Central"/>
</dbReference>
<dbReference type="GO" id="GO:0035556">
    <property type="term" value="P:intracellular signal transduction"/>
    <property type="evidence" value="ECO:0000318"/>
    <property type="project" value="GO_Central"/>
</dbReference>
<dbReference type="CDD" id="cd05579">
    <property type="entry name" value="STKc_MAST_like"/>
    <property type="match status" value="1"/>
</dbReference>
<dbReference type="FunFam" id="1.10.510.10:FF:000604">
    <property type="entry name" value="AGC protein kinase"/>
    <property type="match status" value="1"/>
</dbReference>
<dbReference type="Gene3D" id="3.30.200.20">
    <property type="entry name" value="Phosphorylase Kinase, domain 1"/>
    <property type="match status" value="1"/>
</dbReference>
<dbReference type="Gene3D" id="1.10.510.10">
    <property type="entry name" value="Transferase(Phosphotransferase) domain 1"/>
    <property type="match status" value="2"/>
</dbReference>
<dbReference type="InterPro" id="IPR000961">
    <property type="entry name" value="AGC-kinase_C"/>
</dbReference>
<dbReference type="InterPro" id="IPR011009">
    <property type="entry name" value="Kinase-like_dom_sf"/>
</dbReference>
<dbReference type="InterPro" id="IPR000719">
    <property type="entry name" value="Prot_kinase_dom"/>
</dbReference>
<dbReference type="InterPro" id="IPR008271">
    <property type="entry name" value="Ser/Thr_kinase_AS"/>
</dbReference>
<dbReference type="InterPro" id="IPR050236">
    <property type="entry name" value="Ser_Thr_kinase_AGC"/>
</dbReference>
<dbReference type="PANTHER" id="PTHR24356">
    <property type="entry name" value="SERINE/THREONINE-PROTEIN KINASE"/>
    <property type="match status" value="1"/>
</dbReference>
<dbReference type="PANTHER" id="PTHR24356:SF385">
    <property type="entry name" value="SERINE_THREONINE-PROTEIN KINASE PKGA-RELATED"/>
    <property type="match status" value="1"/>
</dbReference>
<dbReference type="Pfam" id="PF00069">
    <property type="entry name" value="Pkinase"/>
    <property type="match status" value="2"/>
</dbReference>
<dbReference type="SMART" id="SM00220">
    <property type="entry name" value="S_TKc"/>
    <property type="match status" value="1"/>
</dbReference>
<dbReference type="SUPFAM" id="SSF56112">
    <property type="entry name" value="Protein kinase-like (PK-like)"/>
    <property type="match status" value="1"/>
</dbReference>
<dbReference type="PROSITE" id="PS51285">
    <property type="entry name" value="AGC_KINASE_CTER"/>
    <property type="match status" value="1"/>
</dbReference>
<dbReference type="PROSITE" id="PS50011">
    <property type="entry name" value="PROTEIN_KINASE_DOM"/>
    <property type="match status" value="1"/>
</dbReference>
<dbReference type="PROSITE" id="PS00108">
    <property type="entry name" value="PROTEIN_KINASE_ST"/>
    <property type="match status" value="1"/>
</dbReference>
<proteinExistence type="inferred from homology"/>
<name>PKGA_DICDI</name>
<protein>
    <recommendedName>
        <fullName>Probable serine/threonine-protein kinase pkgA</fullName>
        <ecNumber>2.7.11.1</ecNumber>
    </recommendedName>
</protein>
<evidence type="ECO:0000255" key="1">
    <source>
        <dbReference type="PROSITE-ProRule" id="PRU00159"/>
    </source>
</evidence>
<evidence type="ECO:0000255" key="2">
    <source>
        <dbReference type="PROSITE-ProRule" id="PRU00618"/>
    </source>
</evidence>
<evidence type="ECO:0000255" key="3">
    <source>
        <dbReference type="PROSITE-ProRule" id="PRU10027"/>
    </source>
</evidence>
<evidence type="ECO:0000256" key="4">
    <source>
        <dbReference type="SAM" id="MobiDB-lite"/>
    </source>
</evidence>
<evidence type="ECO:0000305" key="5"/>
<comment type="catalytic activity">
    <reaction>
        <text>L-seryl-[protein] + ATP = O-phospho-L-seryl-[protein] + ADP + H(+)</text>
        <dbReference type="Rhea" id="RHEA:17989"/>
        <dbReference type="Rhea" id="RHEA-COMP:9863"/>
        <dbReference type="Rhea" id="RHEA-COMP:11604"/>
        <dbReference type="ChEBI" id="CHEBI:15378"/>
        <dbReference type="ChEBI" id="CHEBI:29999"/>
        <dbReference type="ChEBI" id="CHEBI:30616"/>
        <dbReference type="ChEBI" id="CHEBI:83421"/>
        <dbReference type="ChEBI" id="CHEBI:456216"/>
        <dbReference type="EC" id="2.7.11.1"/>
    </reaction>
</comment>
<comment type="catalytic activity">
    <reaction>
        <text>L-threonyl-[protein] + ATP = O-phospho-L-threonyl-[protein] + ADP + H(+)</text>
        <dbReference type="Rhea" id="RHEA:46608"/>
        <dbReference type="Rhea" id="RHEA-COMP:11060"/>
        <dbReference type="Rhea" id="RHEA-COMP:11605"/>
        <dbReference type="ChEBI" id="CHEBI:15378"/>
        <dbReference type="ChEBI" id="CHEBI:30013"/>
        <dbReference type="ChEBI" id="CHEBI:30616"/>
        <dbReference type="ChEBI" id="CHEBI:61977"/>
        <dbReference type="ChEBI" id="CHEBI:456216"/>
        <dbReference type="EC" id="2.7.11.1"/>
    </reaction>
</comment>
<comment type="similarity">
    <text evidence="5">Belongs to the protein kinase superfamily. AGC Ser/Thr protein kinase family.</text>
</comment>
<reference key="1">
    <citation type="journal article" date="2005" name="Nature">
        <title>The genome of the social amoeba Dictyostelium discoideum.</title>
        <authorList>
            <person name="Eichinger L."/>
            <person name="Pachebat J.A."/>
            <person name="Gloeckner G."/>
            <person name="Rajandream M.A."/>
            <person name="Sucgang R."/>
            <person name="Berriman M."/>
            <person name="Song J."/>
            <person name="Olsen R."/>
            <person name="Szafranski K."/>
            <person name="Xu Q."/>
            <person name="Tunggal B."/>
            <person name="Kummerfeld S."/>
            <person name="Madera M."/>
            <person name="Konfortov B.A."/>
            <person name="Rivero F."/>
            <person name="Bankier A.T."/>
            <person name="Lehmann R."/>
            <person name="Hamlin N."/>
            <person name="Davies R."/>
            <person name="Gaudet P."/>
            <person name="Fey P."/>
            <person name="Pilcher K."/>
            <person name="Chen G."/>
            <person name="Saunders D."/>
            <person name="Sodergren E.J."/>
            <person name="Davis P."/>
            <person name="Kerhornou A."/>
            <person name="Nie X."/>
            <person name="Hall N."/>
            <person name="Anjard C."/>
            <person name="Hemphill L."/>
            <person name="Bason N."/>
            <person name="Farbrother P."/>
            <person name="Desany B."/>
            <person name="Just E."/>
            <person name="Morio T."/>
            <person name="Rost R."/>
            <person name="Churcher C.M."/>
            <person name="Cooper J."/>
            <person name="Haydock S."/>
            <person name="van Driessche N."/>
            <person name="Cronin A."/>
            <person name="Goodhead I."/>
            <person name="Muzny D.M."/>
            <person name="Mourier T."/>
            <person name="Pain A."/>
            <person name="Lu M."/>
            <person name="Harper D."/>
            <person name="Lindsay R."/>
            <person name="Hauser H."/>
            <person name="James K.D."/>
            <person name="Quiles M."/>
            <person name="Madan Babu M."/>
            <person name="Saito T."/>
            <person name="Buchrieser C."/>
            <person name="Wardroper A."/>
            <person name="Felder M."/>
            <person name="Thangavelu M."/>
            <person name="Johnson D."/>
            <person name="Knights A."/>
            <person name="Loulseged H."/>
            <person name="Mungall K.L."/>
            <person name="Oliver K."/>
            <person name="Price C."/>
            <person name="Quail M.A."/>
            <person name="Urushihara H."/>
            <person name="Hernandez J."/>
            <person name="Rabbinowitsch E."/>
            <person name="Steffen D."/>
            <person name="Sanders M."/>
            <person name="Ma J."/>
            <person name="Kohara Y."/>
            <person name="Sharp S."/>
            <person name="Simmonds M.N."/>
            <person name="Spiegler S."/>
            <person name="Tivey A."/>
            <person name="Sugano S."/>
            <person name="White B."/>
            <person name="Walker D."/>
            <person name="Woodward J.R."/>
            <person name="Winckler T."/>
            <person name="Tanaka Y."/>
            <person name="Shaulsky G."/>
            <person name="Schleicher M."/>
            <person name="Weinstock G.M."/>
            <person name="Rosenthal A."/>
            <person name="Cox E.C."/>
            <person name="Chisholm R.L."/>
            <person name="Gibbs R.A."/>
            <person name="Loomis W.F."/>
            <person name="Platzer M."/>
            <person name="Kay R.R."/>
            <person name="Williams J.G."/>
            <person name="Dear P.H."/>
            <person name="Noegel A.A."/>
            <person name="Barrell B.G."/>
            <person name="Kuspa A."/>
        </authorList>
    </citation>
    <scope>NUCLEOTIDE SEQUENCE [LARGE SCALE GENOMIC DNA]</scope>
    <source>
        <strain>AX4</strain>
    </source>
</reference>
<reference key="2">
    <citation type="journal article" date="2002" name="Nature">
        <title>Sequence and analysis of chromosome 2 of Dictyostelium discoideum.</title>
        <authorList>
            <person name="Gloeckner G."/>
            <person name="Eichinger L."/>
            <person name="Szafranski K."/>
            <person name="Pachebat J.A."/>
            <person name="Bankier A.T."/>
            <person name="Dear P.H."/>
            <person name="Lehmann R."/>
            <person name="Baumgart C."/>
            <person name="Parra G."/>
            <person name="Abril J.F."/>
            <person name="Guigo R."/>
            <person name="Kumpf K."/>
            <person name="Tunggal B."/>
            <person name="Cox E.C."/>
            <person name="Quail M.A."/>
            <person name="Platzer M."/>
            <person name="Rosenthal A."/>
            <person name="Noegel A.A."/>
        </authorList>
    </citation>
    <scope>NUCLEOTIDE SEQUENCE [LARGE SCALE GENOMIC DNA]</scope>
    <source>
        <strain>AX4</strain>
    </source>
</reference>
<reference key="3">
    <citation type="submission" date="1997-08" db="EMBL/GenBank/DDBJ databases">
        <authorList>
            <person name="Loomis W.F."/>
            <person name="Iranfar N."/>
        </authorList>
    </citation>
    <scope>NUCLEOTIDE SEQUENCE [GENOMIC DNA] OF 1112-1367</scope>
    <source>
        <strain>AX3</strain>
    </source>
</reference>
<feature type="chain" id="PRO_0000353102" description="Probable serine/threonine-protein kinase pkgA">
    <location>
        <begin position="1"/>
        <end position="1367"/>
    </location>
</feature>
<feature type="domain" description="Protein kinase" evidence="1">
    <location>
        <begin position="810"/>
        <end position="1236"/>
    </location>
</feature>
<feature type="domain" description="AGC-kinase C-terminal" evidence="2">
    <location>
        <begin position="1237"/>
        <end position="1347"/>
    </location>
</feature>
<feature type="region of interest" description="Disordered" evidence="4">
    <location>
        <begin position="140"/>
        <end position="164"/>
    </location>
</feature>
<feature type="region of interest" description="Disordered" evidence="4">
    <location>
        <begin position="264"/>
        <end position="429"/>
    </location>
</feature>
<feature type="region of interest" description="Disordered" evidence="4">
    <location>
        <begin position="456"/>
        <end position="556"/>
    </location>
</feature>
<feature type="region of interest" description="Disordered" evidence="4">
    <location>
        <begin position="771"/>
        <end position="792"/>
    </location>
</feature>
<feature type="region of interest" description="Disordered" evidence="4">
    <location>
        <begin position="971"/>
        <end position="1034"/>
    </location>
</feature>
<feature type="region of interest" description="Disordered" evidence="4">
    <location>
        <begin position="1084"/>
        <end position="1134"/>
    </location>
</feature>
<feature type="region of interest" description="Disordered" evidence="4">
    <location>
        <begin position="1288"/>
        <end position="1312"/>
    </location>
</feature>
<feature type="compositionally biased region" description="Low complexity" evidence="4">
    <location>
        <begin position="143"/>
        <end position="162"/>
    </location>
</feature>
<feature type="compositionally biased region" description="Pro residues" evidence="4">
    <location>
        <begin position="271"/>
        <end position="282"/>
    </location>
</feature>
<feature type="compositionally biased region" description="Basic and acidic residues" evidence="4">
    <location>
        <begin position="287"/>
        <end position="326"/>
    </location>
</feature>
<feature type="compositionally biased region" description="Low complexity" evidence="4">
    <location>
        <begin position="340"/>
        <end position="381"/>
    </location>
</feature>
<feature type="compositionally biased region" description="Polar residues" evidence="4">
    <location>
        <begin position="399"/>
        <end position="421"/>
    </location>
</feature>
<feature type="compositionally biased region" description="Acidic residues" evidence="4">
    <location>
        <begin position="506"/>
        <end position="517"/>
    </location>
</feature>
<feature type="compositionally biased region" description="Basic residues" evidence="4">
    <location>
        <begin position="531"/>
        <end position="544"/>
    </location>
</feature>
<feature type="compositionally biased region" description="Low complexity" evidence="4">
    <location>
        <begin position="979"/>
        <end position="1015"/>
    </location>
</feature>
<feature type="compositionally biased region" description="Polar residues" evidence="4">
    <location>
        <begin position="1025"/>
        <end position="1034"/>
    </location>
</feature>
<feature type="compositionally biased region" description="Low complexity" evidence="4">
    <location>
        <begin position="1092"/>
        <end position="1125"/>
    </location>
</feature>
<feature type="compositionally biased region" description="Low complexity" evidence="4">
    <location>
        <begin position="1294"/>
        <end position="1312"/>
    </location>
</feature>
<feature type="active site" description="Proton acceptor" evidence="1 3">
    <location>
        <position position="933"/>
    </location>
</feature>
<feature type="binding site" evidence="1">
    <location>
        <begin position="816"/>
        <end position="824"/>
    </location>
    <ligand>
        <name>ATP</name>
        <dbReference type="ChEBI" id="CHEBI:30616"/>
    </ligand>
</feature>
<feature type="binding site" evidence="1">
    <location>
        <position position="839"/>
    </location>
    <ligand>
        <name>ATP</name>
        <dbReference type="ChEBI" id="CHEBI:30616"/>
    </ligand>
</feature>
<accession>Q552E9</accession>
<accession>O15747</accession>
<accession>Q75JH3</accession>
<accession>Q75JH4</accession>
<gene>
    <name type="primary">pkgA</name>
    <name type="ORF">DDB_G0276157</name>
</gene>
<organism>
    <name type="scientific">Dictyostelium discoideum</name>
    <name type="common">Social amoeba</name>
    <dbReference type="NCBI Taxonomy" id="44689"/>
    <lineage>
        <taxon>Eukaryota</taxon>
        <taxon>Amoebozoa</taxon>
        <taxon>Evosea</taxon>
        <taxon>Eumycetozoa</taxon>
        <taxon>Dictyostelia</taxon>
        <taxon>Dictyosteliales</taxon>
        <taxon>Dictyosteliaceae</taxon>
        <taxon>Dictyostelium</taxon>
    </lineage>
</organism>